<organismHost>
    <name type="scientific">Homo sapiens</name>
    <name type="common">Human</name>
    <dbReference type="NCBI Taxonomy" id="9606"/>
</organismHost>
<organismHost>
    <name type="scientific">Sus scrofa</name>
    <name type="common">Pig</name>
    <dbReference type="NCBI Taxonomy" id="9823"/>
</organismHost>
<dbReference type="EC" id="3.1.1.53" evidence="1"/>
<dbReference type="EMBL" id="M17868">
    <property type="protein sequence ID" value="AAA43788.1"/>
    <property type="molecule type" value="Genomic_RNA"/>
</dbReference>
<dbReference type="EMBL" id="AJ872181">
    <property type="protein sequence ID" value="CAI43342.1"/>
    <property type="molecule type" value="Genomic_RNA"/>
</dbReference>
<dbReference type="EMBL" id="AY880247">
    <property type="protein sequence ID" value="AAW73083.1"/>
    <property type="molecule type" value="mRNA"/>
</dbReference>
<dbReference type="PIR" id="S07412">
    <property type="entry name" value="S07412"/>
</dbReference>
<dbReference type="PDB" id="1FLC">
    <property type="method" value="X-ray"/>
    <property type="resolution" value="3.20 A"/>
    <property type="chains" value="A/C/E=15-446, B/D/F=447-621"/>
</dbReference>
<dbReference type="PDB" id="6WKO">
    <property type="method" value="X-ray"/>
    <property type="resolution" value="2.40 A"/>
    <property type="chains" value="A=495-586"/>
</dbReference>
<dbReference type="PDBsum" id="1FLC"/>
<dbReference type="PDBsum" id="6WKO"/>
<dbReference type="EMDB" id="EMD-10810"/>
<dbReference type="EMDB" id="EMD-17001"/>
<dbReference type="SMR" id="P07975"/>
<dbReference type="TCDB" id="1.G.14.1.1">
    <property type="family name" value="the influenza virus hemagglutinin/fusion pore-forming protein (influenza-h/fpp) family"/>
</dbReference>
<dbReference type="GlyCosmos" id="P07975">
    <property type="glycosylation" value="7 sites, No reported glycans"/>
</dbReference>
<dbReference type="SwissPalm" id="P07975"/>
<dbReference type="BRENDA" id="3.1.1.53">
    <property type="organism ID" value="2767"/>
</dbReference>
<dbReference type="EvolutionaryTrace" id="P07975"/>
<dbReference type="Proteomes" id="UP000138885">
    <property type="component" value="Genome"/>
</dbReference>
<dbReference type="GO" id="GO:0020002">
    <property type="term" value="C:host cell plasma membrane"/>
    <property type="evidence" value="ECO:0007669"/>
    <property type="project" value="UniProtKB-SubCell"/>
</dbReference>
<dbReference type="GO" id="GO:0016020">
    <property type="term" value="C:membrane"/>
    <property type="evidence" value="ECO:0007669"/>
    <property type="project" value="UniProtKB-UniRule"/>
</dbReference>
<dbReference type="GO" id="GO:0019031">
    <property type="term" value="C:viral envelope"/>
    <property type="evidence" value="ECO:0007669"/>
    <property type="project" value="UniProtKB-UniRule"/>
</dbReference>
<dbReference type="GO" id="GO:0055036">
    <property type="term" value="C:virion membrane"/>
    <property type="evidence" value="ECO:0007669"/>
    <property type="project" value="UniProtKB-SubCell"/>
</dbReference>
<dbReference type="GO" id="GO:0046789">
    <property type="term" value="F:host cell surface receptor binding"/>
    <property type="evidence" value="ECO:0007669"/>
    <property type="project" value="UniProtKB-UniRule"/>
</dbReference>
<dbReference type="GO" id="GO:0106331">
    <property type="term" value="F:sialate 4-O-acetylesterase activity"/>
    <property type="evidence" value="ECO:0007669"/>
    <property type="project" value="RHEA"/>
</dbReference>
<dbReference type="GO" id="GO:0106330">
    <property type="term" value="F:sialate 9-O-acetylesterase activity"/>
    <property type="evidence" value="ECO:0007669"/>
    <property type="project" value="RHEA"/>
</dbReference>
<dbReference type="GO" id="GO:0075509">
    <property type="term" value="P:endocytosis involved in viral entry into host cell"/>
    <property type="evidence" value="ECO:0007669"/>
    <property type="project" value="UniProtKB-KW"/>
</dbReference>
<dbReference type="GO" id="GO:0039654">
    <property type="term" value="P:fusion of virus membrane with host endosome membrane"/>
    <property type="evidence" value="ECO:0007669"/>
    <property type="project" value="UniProtKB-UniRule"/>
</dbReference>
<dbReference type="GO" id="GO:0019064">
    <property type="term" value="P:fusion of virus membrane with host plasma membrane"/>
    <property type="evidence" value="ECO:0007669"/>
    <property type="project" value="InterPro"/>
</dbReference>
<dbReference type="GO" id="GO:0046761">
    <property type="term" value="P:viral budding from plasma membrane"/>
    <property type="evidence" value="ECO:0007669"/>
    <property type="project" value="UniProtKB-UniRule"/>
</dbReference>
<dbReference type="GO" id="GO:0019062">
    <property type="term" value="P:virion attachment to host cell"/>
    <property type="evidence" value="ECO:0007669"/>
    <property type="project" value="UniProtKB-KW"/>
</dbReference>
<dbReference type="Gene3D" id="2.20.70.20">
    <property type="match status" value="2"/>
</dbReference>
<dbReference type="Gene3D" id="3.90.20.10">
    <property type="match status" value="1"/>
</dbReference>
<dbReference type="HAMAP" id="MF_04072">
    <property type="entry name" value="INFV_HEMA"/>
    <property type="match status" value="1"/>
</dbReference>
<dbReference type="InterPro" id="IPR008980">
    <property type="entry name" value="Capsid_hemagglutn"/>
</dbReference>
<dbReference type="InterPro" id="IPR007142">
    <property type="entry name" value="Hemagglutn-estrase_core"/>
</dbReference>
<dbReference type="InterPro" id="IPR003860">
    <property type="entry name" value="Hemagglutn-estrase_hemagglutn"/>
</dbReference>
<dbReference type="InterPro" id="IPR001364">
    <property type="entry name" value="Hemagglutn_influenz_A/B"/>
</dbReference>
<dbReference type="InterPro" id="IPR014831">
    <property type="entry name" value="Hemagglutn_stalk_influenz-C"/>
</dbReference>
<dbReference type="Pfam" id="PF03996">
    <property type="entry name" value="Hema_esterase"/>
    <property type="match status" value="1"/>
</dbReference>
<dbReference type="Pfam" id="PF02710">
    <property type="entry name" value="Hema_HEFG"/>
    <property type="match status" value="1"/>
</dbReference>
<dbReference type="Pfam" id="PF08720">
    <property type="entry name" value="Hema_stalk"/>
    <property type="match status" value="1"/>
</dbReference>
<dbReference type="SUPFAM" id="SSF58064">
    <property type="entry name" value="Influenza hemagglutinin (stalk)"/>
    <property type="match status" value="1"/>
</dbReference>
<dbReference type="SUPFAM" id="SSF52266">
    <property type="entry name" value="SGNH hydrolase"/>
    <property type="match status" value="1"/>
</dbReference>
<dbReference type="SUPFAM" id="SSF49818">
    <property type="entry name" value="Viral protein domain"/>
    <property type="match status" value="1"/>
</dbReference>
<proteinExistence type="evidence at protein level"/>
<reference key="1">
    <citation type="journal article" date="1984" name="Virus Res.">
        <title>Structure of the influenza C glycoprotein gene as determined from cloned DNA.</title>
        <authorList>
            <person name="Pfeifer J.B."/>
            <person name="Compans R.W."/>
        </authorList>
    </citation>
    <scope>NUCLEOTIDE SEQUENCE [GENOMIC RNA]</scope>
</reference>
<reference key="2">
    <citation type="journal article" date="2005" name="J. Gen. Virol.">
        <title>Use of influenza C virus glycoprotein HEF for generation of vesicular stomatitis virus pseudotypes.</title>
        <authorList>
            <person name="Hanika A."/>
            <person name="Larisch B."/>
            <person name="Steinmann E."/>
            <person name="Schwegmann-Wessels C."/>
            <person name="Herrler G."/>
            <person name="Zimmer G."/>
        </authorList>
    </citation>
    <scope>NUCLEOTIDE SEQUENCE [GENOMIC RNA / MRNA]</scope>
</reference>
<reference key="3">
    <citation type="journal article" date="1995" name="J. Gen. Virol.">
        <title>The catalytic triad of the influenza C virus glycoprotein HEF esterase: characterization by site-directed mutagenesis and functional analysis.</title>
        <authorList>
            <person name="Pleschka S."/>
            <person name="Klenk H.D."/>
            <person name="Herrler G."/>
        </authorList>
    </citation>
    <scope>MUTAGENESIS OF SER-71; ASP-261; ASN-280; HIS-368 AND HIS-369</scope>
</reference>
<reference key="4">
    <citation type="journal article" date="1998" name="Nature">
        <title>Structure of the haemagglutinin-esterase-fusion glycoprotein of influenza C virus.</title>
        <authorList>
            <person name="Rosenthal P.B."/>
            <person name="Zhang X."/>
            <person name="Formanowski F."/>
            <person name="Fitz W."/>
            <person name="Wong C.H."/>
            <person name="Meier-Ewert H."/>
            <person name="Skehel J.J."/>
            <person name="Wiley D.C."/>
        </authorList>
    </citation>
    <scope>X-RAY CRYSTALLOGRAPHY (3.2 ANGSTROMS) OF 15-621 AND ACTIVE SITE</scope>
</reference>
<organism>
    <name type="scientific">Influenza C virus (strain C/Johannesburg/1/1966)</name>
    <dbReference type="NCBI Taxonomy" id="100673"/>
    <lineage>
        <taxon>Viruses</taxon>
        <taxon>Riboviria</taxon>
        <taxon>Orthornavirae</taxon>
        <taxon>Negarnaviricota</taxon>
        <taxon>Polyploviricotina</taxon>
        <taxon>Insthoviricetes</taxon>
        <taxon>Articulavirales</taxon>
        <taxon>Orthomyxoviridae</taxon>
        <taxon>Gammainfluenzavirus</taxon>
        <taxon>Gammainfluenzavirus influenzae</taxon>
        <taxon>Influenza C virus</taxon>
    </lineage>
</organism>
<evidence type="ECO:0000255" key="1">
    <source>
        <dbReference type="HAMAP-Rule" id="MF_04072"/>
    </source>
</evidence>
<evidence type="ECO:0000269" key="2">
    <source>
    </source>
</evidence>
<evidence type="ECO:0007829" key="3">
    <source>
        <dbReference type="PDB" id="1FLC"/>
    </source>
</evidence>
<evidence type="ECO:0007829" key="4">
    <source>
        <dbReference type="PDB" id="6WKO"/>
    </source>
</evidence>
<protein>
    <recommendedName>
        <fullName evidence="1">Hemagglutinin-esterase-fusion glycoprotein</fullName>
        <shortName evidence="1">HEF</shortName>
        <ecNumber evidence="1">3.1.1.53</ecNumber>
    </recommendedName>
    <component>
        <recommendedName>
            <fullName evidence="1">Hemagglutinin-esterase-fusion glycoprotein chain 1</fullName>
            <shortName evidence="1">HEF1</shortName>
        </recommendedName>
    </component>
    <component>
        <recommendedName>
            <fullName evidence="1">Hemagglutinin-esterase-fusion glycoprotein chain 2</fullName>
            <shortName evidence="1">HEF2</shortName>
        </recommendedName>
    </component>
</protein>
<gene>
    <name evidence="1" type="primary">HE</name>
</gene>
<name>HEMA_INCJH</name>
<comment type="function">
    <text evidence="1">Binds to the N-acetyl-9-O-acetylneuraminic acid residues on the cell surface, bringing about the attachment of the virus particle to the cell. Plays a major role in the determination of host range restriction and virulence. Class I viral fusion protein. Responsible for penetration of the virus into the cell cytoplasm by mediating the fusion of the membrane of the endocytosed virus particle with the endosomal membrane. Low pH in endosomes induce an irreversible conformational change in HEF2, releasing the fusion hydrophobic peptide. Several trimers are required to form a competent fusion pore. Displays a receptor-destroying activity which is a neuraminidate-O-acetyl esterase. This activity cleaves off any receptor on the cell surface, which would otherwise prevent virions release. These cleavages prevent self-aggregation and ensure the efficient spread of the progeny virus from cell to cell.</text>
</comment>
<comment type="catalytic activity">
    <reaction evidence="1">
        <text>N-acetyl-9-O-acetylneuraminate + H2O = N-acetylneuraminate + acetate + H(+)</text>
        <dbReference type="Rhea" id="RHEA:22600"/>
        <dbReference type="ChEBI" id="CHEBI:15377"/>
        <dbReference type="ChEBI" id="CHEBI:15378"/>
        <dbReference type="ChEBI" id="CHEBI:28999"/>
        <dbReference type="ChEBI" id="CHEBI:30089"/>
        <dbReference type="ChEBI" id="CHEBI:35418"/>
        <dbReference type="EC" id="3.1.1.53"/>
    </reaction>
</comment>
<comment type="catalytic activity">
    <reaction evidence="1">
        <text>N-acetyl-4-O-acetylneuraminate + H2O = N-acetylneuraminate + acetate + H(+)</text>
        <dbReference type="Rhea" id="RHEA:25564"/>
        <dbReference type="ChEBI" id="CHEBI:15377"/>
        <dbReference type="ChEBI" id="CHEBI:15378"/>
        <dbReference type="ChEBI" id="CHEBI:29006"/>
        <dbReference type="ChEBI" id="CHEBI:30089"/>
        <dbReference type="ChEBI" id="CHEBI:35418"/>
        <dbReference type="EC" id="3.1.1.53"/>
    </reaction>
</comment>
<comment type="subunit">
    <text evidence="1">Homotrimer of disulfide-linked HEF1-HEF2.</text>
</comment>
<comment type="subcellular location">
    <subcellularLocation>
        <location evidence="1">Virion membrane</location>
        <topology evidence="1">Single-pass type I membrane protein</topology>
    </subcellularLocation>
    <subcellularLocation>
        <location evidence="1">Host cell membrane</location>
        <topology evidence="1">Single-pass type I membrane protein</topology>
    </subcellularLocation>
</comment>
<comment type="PTM">
    <text evidence="1">In natural infection, inactive HEF is matured into HEF1 and HEF2 outside the cell by one or more trypsin-like, arginine-specific endoprotease.</text>
</comment>
<comment type="similarity">
    <text evidence="1">Belongs to the influenza viruses hemagglutinin family.</text>
</comment>
<feature type="signal peptide" evidence="1">
    <location>
        <begin position="1"/>
        <end position="14"/>
    </location>
</feature>
<feature type="chain" id="PRO_0000440555" description="Hemagglutinin-esterase-fusion glycoprotein" evidence="1">
    <location>
        <begin position="15"/>
        <end position="655"/>
    </location>
</feature>
<feature type="chain" id="PRO_0000039152" description="Hemagglutinin-esterase-fusion glycoprotein chain 1" evidence="1">
    <location>
        <begin position="15"/>
        <end position="446"/>
    </location>
</feature>
<feature type="chain" id="PRO_0000039153" description="Hemagglutinin-esterase-fusion glycoprotein chain 2" evidence="1">
    <location>
        <begin position="447"/>
        <end position="655"/>
    </location>
</feature>
<feature type="topological domain" description="Extracellular" evidence="1">
    <location>
        <begin position="15"/>
        <end position="630"/>
    </location>
</feature>
<feature type="transmembrane region" description="Helical" evidence="1">
    <location>
        <begin position="631"/>
        <end position="651"/>
    </location>
</feature>
<feature type="topological domain" description="Cytoplasmic" evidence="1">
    <location>
        <begin position="652"/>
        <end position="655"/>
    </location>
</feature>
<feature type="region of interest" description="Fusion domain-1" evidence="1">
    <location>
        <begin position="15"/>
        <end position="40"/>
    </location>
</feature>
<feature type="region of interest" description="Esterase domain-1" evidence="1">
    <location>
        <begin position="41"/>
        <end position="158"/>
    </location>
</feature>
<feature type="region of interest" description="Esterase domain-1">
    <location>
        <begin position="41"/>
        <end position="151"/>
    </location>
</feature>
<feature type="region of interest" description="N-acetyl-9-O-acetylneuraminic acid binding">
    <location>
        <begin position="151"/>
        <end position="310"/>
    </location>
</feature>
<feature type="region of interest" description="N-acetyl-9-O-acetylneuraminic acid binding" evidence="1">
    <location>
        <begin position="158"/>
        <end position="310"/>
    </location>
</feature>
<feature type="region of interest" description="Esterase domain-2" evidence="1">
    <location>
        <begin position="310"/>
        <end position="364"/>
    </location>
</feature>
<feature type="region of interest" description="Esterase domain-2">
    <location>
        <begin position="311"/>
        <end position="365"/>
    </location>
</feature>
<feature type="region of interest" description="Fusion domain-2" evidence="1">
    <location>
        <begin position="365"/>
        <end position="650"/>
    </location>
</feature>
<feature type="region of interest" description="Fusion domain-2">
    <location>
        <begin position="366"/>
        <end position="651"/>
    </location>
</feature>
<feature type="active site" description="Nucleophile" evidence="1">
    <location>
        <position position="71"/>
    </location>
</feature>
<feature type="active site" description="Charge relay system" evidence="1">
    <location>
        <position position="366"/>
    </location>
</feature>
<feature type="active site" description="Charge relay system" evidence="1">
    <location>
        <position position="369"/>
    </location>
</feature>
<feature type="glycosylation site" description="N-linked (GlcNAc...) asparagine; by host" evidence="1">
    <location>
        <position position="26"/>
    </location>
</feature>
<feature type="glycosylation site" description="N-linked (GlcNAc...) asparagine; by host" evidence="1">
    <location>
        <position position="61"/>
    </location>
</feature>
<feature type="glycosylation site" description="N-linked (GlcNAc...) asparagine; by host" evidence="1">
    <location>
        <position position="144"/>
    </location>
</feature>
<feature type="glycosylation site" description="N-linked (GlcNAc...) asparagine; by host" evidence="1">
    <location>
        <position position="189"/>
    </location>
</feature>
<feature type="glycosylation site" description="N-linked (GlcNAc...) asparagine; by host" evidence="1">
    <location>
        <position position="395"/>
    </location>
</feature>
<feature type="glycosylation site" description="N-linked (GlcNAc...) asparagine; by host" evidence="1">
    <location>
        <position position="552"/>
    </location>
</feature>
<feature type="glycosylation site" description="N-linked (GlcNAc...) asparagine; by host" evidence="1">
    <location>
        <position position="603"/>
    </location>
</feature>
<feature type="disulfide bond" description="Interchain (between HEF1 and HEF2 chains)" evidence="1">
    <location>
        <begin position="20"/>
        <end position="583"/>
    </location>
</feature>
<feature type="disulfide bond">
    <location>
        <begin position="120"/>
        <end position="165"/>
    </location>
</feature>
<feature type="disulfide bond">
    <location>
        <begin position="140"/>
        <end position="188"/>
    </location>
</feature>
<feature type="disulfide bond" evidence="1">
    <location>
        <begin position="210"/>
        <end position="252"/>
    </location>
</feature>
<feature type="disulfide bond" evidence="1">
    <location>
        <begin position="229"/>
        <end position="316"/>
    </location>
</feature>
<feature type="disulfide bond" evidence="1">
    <location>
        <begin position="237"/>
        <end position="289"/>
    </location>
</feature>
<feature type="disulfide bond">
    <location>
        <begin position="346"/>
        <end position="352"/>
    </location>
</feature>
<feature type="sequence variant">
    <original>F</original>
    <variation>S</variation>
    <location>
        <position position="96"/>
    </location>
</feature>
<feature type="sequence variant">
    <original>F</original>
    <variation>S</variation>
    <location>
        <position position="263"/>
    </location>
</feature>
<feature type="sequence variant">
    <original>V</original>
    <variation>L</variation>
    <location>
        <position position="457"/>
    </location>
</feature>
<feature type="sequence variant">
    <original>T</original>
    <variation>A</variation>
    <location>
        <position position="465"/>
    </location>
</feature>
<feature type="mutagenesis site" description="96% loss of esterase activity." evidence="2">
    <original>S</original>
    <variation>A</variation>
    <location>
        <position position="71"/>
    </location>
</feature>
<feature type="mutagenesis site" description="64% loss of esterase activity." evidence="2">
    <original>D</original>
    <variation>A</variation>
    <location>
        <position position="261"/>
    </location>
</feature>
<feature type="mutagenesis site" description="Complete loss of esterase activity." evidence="2">
    <original>N</original>
    <variation>A</variation>
    <location>
        <position position="280"/>
    </location>
</feature>
<feature type="mutagenesis site" description="Complete loss of esterase activity." evidence="2">
    <original>H</original>
    <variation>A</variation>
    <location>
        <position position="368"/>
    </location>
</feature>
<feature type="mutagenesis site" description="Complete loss of esterase activity." evidence="2">
    <original>H</original>
    <variation>A</variation>
    <location>
        <position position="369"/>
    </location>
</feature>
<feature type="strand" evidence="3">
    <location>
        <begin position="19"/>
        <end position="25"/>
    </location>
</feature>
<feature type="strand" evidence="3">
    <location>
        <begin position="39"/>
        <end position="48"/>
    </location>
</feature>
<feature type="strand" evidence="3">
    <location>
        <begin position="59"/>
        <end position="69"/>
    </location>
</feature>
<feature type="strand" evidence="3">
    <location>
        <begin position="71"/>
        <end position="73"/>
    </location>
</feature>
<feature type="helix" evidence="3">
    <location>
        <begin position="80"/>
        <end position="83"/>
    </location>
</feature>
<feature type="helix" evidence="3">
    <location>
        <begin position="88"/>
        <end position="92"/>
    </location>
</feature>
<feature type="strand" evidence="3">
    <location>
        <begin position="94"/>
        <end position="96"/>
    </location>
</feature>
<feature type="helix" evidence="3">
    <location>
        <begin position="102"/>
        <end position="107"/>
    </location>
</feature>
<feature type="strand" evidence="3">
    <location>
        <begin position="110"/>
        <end position="112"/>
    </location>
</feature>
<feature type="strand" evidence="3">
    <location>
        <begin position="118"/>
        <end position="120"/>
    </location>
</feature>
<feature type="strand" evidence="3">
    <location>
        <begin position="122"/>
        <end position="126"/>
    </location>
</feature>
<feature type="helix" evidence="3">
    <location>
        <begin position="130"/>
        <end position="132"/>
    </location>
</feature>
<feature type="helix" evidence="3">
    <location>
        <begin position="134"/>
        <end position="136"/>
    </location>
</feature>
<feature type="helix" evidence="3">
    <location>
        <begin position="146"/>
        <end position="160"/>
    </location>
</feature>
<feature type="strand" evidence="3">
    <location>
        <begin position="164"/>
        <end position="169"/>
    </location>
</feature>
<feature type="strand" evidence="3">
    <location>
        <begin position="186"/>
        <end position="188"/>
    </location>
</feature>
<feature type="strand" evidence="3">
    <location>
        <begin position="194"/>
        <end position="197"/>
    </location>
</feature>
<feature type="turn" evidence="3">
    <location>
        <begin position="205"/>
        <end position="208"/>
    </location>
</feature>
<feature type="strand" evidence="3">
    <location>
        <begin position="214"/>
        <end position="220"/>
    </location>
</feature>
<feature type="strand" evidence="3">
    <location>
        <begin position="222"/>
        <end position="224"/>
    </location>
</feature>
<feature type="strand" evidence="3">
    <location>
        <begin position="230"/>
        <end position="240"/>
    </location>
</feature>
<feature type="helix" evidence="3">
    <location>
        <begin position="244"/>
        <end position="250"/>
    </location>
</feature>
<feature type="strand" evidence="3">
    <location>
        <begin position="256"/>
        <end position="260"/>
    </location>
</feature>
<feature type="strand" evidence="3">
    <location>
        <begin position="262"/>
        <end position="264"/>
    </location>
</feature>
<feature type="strand" evidence="3">
    <location>
        <begin position="266"/>
        <end position="271"/>
    </location>
</feature>
<feature type="turn" evidence="3">
    <location>
        <begin position="272"/>
        <end position="274"/>
    </location>
</feature>
<feature type="strand" evidence="3">
    <location>
        <begin position="286"/>
        <end position="294"/>
    </location>
</feature>
<feature type="strand" evidence="3">
    <location>
        <begin position="296"/>
        <end position="303"/>
    </location>
</feature>
<feature type="strand" evidence="3">
    <location>
        <begin position="314"/>
        <end position="317"/>
    </location>
</feature>
<feature type="strand" evidence="3">
    <location>
        <begin position="325"/>
        <end position="328"/>
    </location>
</feature>
<feature type="helix" evidence="3">
    <location>
        <begin position="341"/>
        <end position="347"/>
    </location>
</feature>
<feature type="strand" evidence="3">
    <location>
        <begin position="352"/>
        <end position="355"/>
    </location>
</feature>
<feature type="strand" evidence="3">
    <location>
        <begin position="364"/>
        <end position="366"/>
    </location>
</feature>
<feature type="helix" evidence="3">
    <location>
        <begin position="372"/>
        <end position="377"/>
    </location>
</feature>
<feature type="helix" evidence="3">
    <location>
        <begin position="378"/>
        <end position="382"/>
    </location>
</feature>
<feature type="strand" evidence="3">
    <location>
        <begin position="386"/>
        <end position="389"/>
    </location>
</feature>
<feature type="strand" evidence="3">
    <location>
        <begin position="392"/>
        <end position="394"/>
    </location>
</feature>
<feature type="strand" evidence="3">
    <location>
        <begin position="399"/>
        <end position="403"/>
    </location>
</feature>
<feature type="strand" evidence="3">
    <location>
        <begin position="407"/>
        <end position="412"/>
    </location>
</feature>
<feature type="turn" evidence="3">
    <location>
        <begin position="419"/>
        <end position="421"/>
    </location>
</feature>
<feature type="strand" evidence="3">
    <location>
        <begin position="424"/>
        <end position="432"/>
    </location>
</feature>
<feature type="strand" evidence="3">
    <location>
        <begin position="452"/>
        <end position="454"/>
    </location>
</feature>
<feature type="strand" evidence="3">
    <location>
        <begin position="459"/>
        <end position="462"/>
    </location>
</feature>
<feature type="strand" evidence="3">
    <location>
        <begin position="469"/>
        <end position="474"/>
    </location>
</feature>
<feature type="turn" evidence="3">
    <location>
        <begin position="488"/>
        <end position="490"/>
    </location>
</feature>
<feature type="helix" evidence="4">
    <location>
        <begin position="497"/>
        <end position="549"/>
    </location>
</feature>
<feature type="helix" evidence="4">
    <location>
        <begin position="555"/>
        <end position="571"/>
    </location>
</feature>
<feature type="turn" evidence="3">
    <location>
        <begin position="573"/>
        <end position="575"/>
    </location>
</feature>
<feature type="turn" evidence="3">
    <location>
        <begin position="588"/>
        <end position="590"/>
    </location>
</feature>
<feature type="helix" evidence="3">
    <location>
        <begin position="593"/>
        <end position="599"/>
    </location>
</feature>
<accession>P07975</accession>
<accession>Q5EI66</accession>
<accession>Q5JZY4</accession>
<keyword id="KW-0002">3D-structure</keyword>
<keyword id="KW-1015">Disulfide bond</keyword>
<keyword id="KW-1170">Fusion of virus membrane with host endosomal membrane</keyword>
<keyword id="KW-1168">Fusion of virus membrane with host membrane</keyword>
<keyword id="KW-0325">Glycoprotein</keyword>
<keyword id="KW-0348">Hemagglutinin</keyword>
<keyword id="KW-1032">Host cell membrane</keyword>
<keyword id="KW-1043">Host membrane</keyword>
<keyword id="KW-0945">Host-virus interaction</keyword>
<keyword id="KW-0378">Hydrolase</keyword>
<keyword id="KW-0472">Membrane</keyword>
<keyword id="KW-0732">Signal</keyword>
<keyword id="KW-0812">Transmembrane</keyword>
<keyword id="KW-1133">Transmembrane helix</keyword>
<keyword id="KW-1161">Viral attachment to host cell</keyword>
<keyword id="KW-0261">Viral envelope protein</keyword>
<keyword id="KW-1162">Viral penetration into host cytoplasm</keyword>
<keyword id="KW-0946">Virion</keyword>
<keyword id="KW-1164">Virus endocytosis by host</keyword>
<keyword id="KW-1160">Virus entry into host cell</keyword>
<sequence>MFFSLLLVLGLTEAEKIKICLQKQVNSSFSLHNGFGGNLYATEEKRMFELVKPKAGASVLNQSTWIGFGDSRTDKSNSAFPRSADVSAKTADKFRFLSGGSLMLSMFGPPGKVDYLYQGCGKHKVFYEGVNWSPHAAINCYRKNWTDIKLNFQKNIYELASQSHCMSLVNALDKTIPLQVTAGTAGNCNNSFLKNPALYTQEVKPSENKCGKENLAFFTLPTQFGTYECKLHLVASCYFIYDSKEVYNKRGCDNYFQVIYDSFGKVVGGLDNRVSPYTGNSGDTPTMQCDMLQLKPGRYSVRSSPRFLLMPERSYCFDMKEKGPVTAVQSIWGKGRESDYAVDQACLSTPGCMLIQKQKPYIGEADDHHGDQEMRELLSGLDYEARCISQSGWVNETSPFTEKYLLPPKFGRCPLAAKEESIPKIPDGLLIPTSGTDTTVTKPKSRIFGIDDLIIGVLFVAIVETGIGGYLLGSRKESGGGVTKESAEKGFEKIGNDIQILKSSINIAIEKLNDRISHDEQAIRDLTLEIENARSEALLGELGIIRALLVGNISIGLQESLWELASEITNRAGDLAVEVSPGCWIIDNNICDQSCQNFIFKFNETAPVPTIPPLDTKIDLQSDPFYWGSSLGLAITATISLAALVISGIAICRTK</sequence>